<dbReference type="EC" id="2.4.2.7" evidence="1"/>
<dbReference type="EMBL" id="AE000516">
    <property type="protein sequence ID" value="AAK46974.1"/>
    <property type="status" value="ALT_INIT"/>
    <property type="molecule type" value="Genomic_DNA"/>
</dbReference>
<dbReference type="PIR" id="G70725">
    <property type="entry name" value="G70725"/>
</dbReference>
<dbReference type="SMR" id="P9WQ06"/>
<dbReference type="KEGG" id="mtc:MT2661"/>
<dbReference type="HOGENOM" id="CLU_063339_3_3_11"/>
<dbReference type="UniPathway" id="UPA00588">
    <property type="reaction ID" value="UER00646"/>
</dbReference>
<dbReference type="Proteomes" id="UP000001020">
    <property type="component" value="Chromosome"/>
</dbReference>
<dbReference type="GO" id="GO:0005737">
    <property type="term" value="C:cytoplasm"/>
    <property type="evidence" value="ECO:0007669"/>
    <property type="project" value="UniProtKB-SubCell"/>
</dbReference>
<dbReference type="GO" id="GO:0002055">
    <property type="term" value="F:adenine binding"/>
    <property type="evidence" value="ECO:0007669"/>
    <property type="project" value="TreeGrafter"/>
</dbReference>
<dbReference type="GO" id="GO:0003999">
    <property type="term" value="F:adenine phosphoribosyltransferase activity"/>
    <property type="evidence" value="ECO:0007669"/>
    <property type="project" value="UniProtKB-UniRule"/>
</dbReference>
<dbReference type="GO" id="GO:0016208">
    <property type="term" value="F:AMP binding"/>
    <property type="evidence" value="ECO:0007669"/>
    <property type="project" value="TreeGrafter"/>
</dbReference>
<dbReference type="GO" id="GO:0006168">
    <property type="term" value="P:adenine salvage"/>
    <property type="evidence" value="ECO:0007669"/>
    <property type="project" value="InterPro"/>
</dbReference>
<dbReference type="GO" id="GO:0044209">
    <property type="term" value="P:AMP salvage"/>
    <property type="evidence" value="ECO:0007669"/>
    <property type="project" value="UniProtKB-UniRule"/>
</dbReference>
<dbReference type="GO" id="GO:0006166">
    <property type="term" value="P:purine ribonucleoside salvage"/>
    <property type="evidence" value="ECO:0007669"/>
    <property type="project" value="UniProtKB-KW"/>
</dbReference>
<dbReference type="CDD" id="cd06223">
    <property type="entry name" value="PRTases_typeI"/>
    <property type="match status" value="1"/>
</dbReference>
<dbReference type="FunFam" id="3.40.50.2020:FF:000021">
    <property type="entry name" value="Adenine phosphoribosyltransferase"/>
    <property type="match status" value="1"/>
</dbReference>
<dbReference type="Gene3D" id="3.40.50.2020">
    <property type="match status" value="1"/>
</dbReference>
<dbReference type="HAMAP" id="MF_00004">
    <property type="entry name" value="Aden_phosphoribosyltr"/>
    <property type="match status" value="1"/>
</dbReference>
<dbReference type="InterPro" id="IPR005764">
    <property type="entry name" value="Ade_phspho_trans"/>
</dbReference>
<dbReference type="InterPro" id="IPR000836">
    <property type="entry name" value="PRibTrfase_dom"/>
</dbReference>
<dbReference type="InterPro" id="IPR029057">
    <property type="entry name" value="PRTase-like"/>
</dbReference>
<dbReference type="InterPro" id="IPR050054">
    <property type="entry name" value="UPRTase/APRTase"/>
</dbReference>
<dbReference type="NCBIfam" id="NF002636">
    <property type="entry name" value="PRK02304.1-5"/>
    <property type="match status" value="1"/>
</dbReference>
<dbReference type="PANTHER" id="PTHR32315">
    <property type="entry name" value="ADENINE PHOSPHORIBOSYLTRANSFERASE"/>
    <property type="match status" value="1"/>
</dbReference>
<dbReference type="PANTHER" id="PTHR32315:SF3">
    <property type="entry name" value="ADENINE PHOSPHORIBOSYLTRANSFERASE"/>
    <property type="match status" value="1"/>
</dbReference>
<dbReference type="Pfam" id="PF00156">
    <property type="entry name" value="Pribosyltran"/>
    <property type="match status" value="1"/>
</dbReference>
<dbReference type="SUPFAM" id="SSF53271">
    <property type="entry name" value="PRTase-like"/>
    <property type="match status" value="1"/>
</dbReference>
<dbReference type="PROSITE" id="PS00103">
    <property type="entry name" value="PUR_PYR_PR_TRANSFER"/>
    <property type="match status" value="1"/>
</dbReference>
<keyword id="KW-0963">Cytoplasm</keyword>
<keyword id="KW-0328">Glycosyltransferase</keyword>
<keyword id="KW-0660">Purine salvage</keyword>
<keyword id="KW-1185">Reference proteome</keyword>
<keyword id="KW-0808">Transferase</keyword>
<accession>P9WQ06</accession>
<accession>L0TA41</accession>
<accession>Q50637</accession>
<gene>
    <name evidence="1" type="primary">apt</name>
    <name type="ordered locus">MT2661</name>
</gene>
<comment type="function">
    <text evidence="1">Catalyzes a salvage reaction resulting in the formation of AMP, that is energically less costly than de novo synthesis.</text>
</comment>
<comment type="catalytic activity">
    <reaction evidence="1">
        <text>AMP + diphosphate = 5-phospho-alpha-D-ribose 1-diphosphate + adenine</text>
        <dbReference type="Rhea" id="RHEA:16609"/>
        <dbReference type="ChEBI" id="CHEBI:16708"/>
        <dbReference type="ChEBI" id="CHEBI:33019"/>
        <dbReference type="ChEBI" id="CHEBI:58017"/>
        <dbReference type="ChEBI" id="CHEBI:456215"/>
        <dbReference type="EC" id="2.4.2.7"/>
    </reaction>
</comment>
<comment type="pathway">
    <text evidence="1">Purine metabolism; AMP biosynthesis via salvage pathway; AMP from adenine: step 1/1.</text>
</comment>
<comment type="subunit">
    <text evidence="1">Homodimer.</text>
</comment>
<comment type="subcellular location">
    <subcellularLocation>
        <location evidence="1">Cytoplasm</location>
    </subcellularLocation>
</comment>
<comment type="similarity">
    <text evidence="1">Belongs to the purine/pyrimidine phosphoribosyltransferase family.</text>
</comment>
<comment type="sequence caution" evidence="2">
    <conflict type="erroneous initiation">
        <sequence resource="EMBL-CDS" id="AAK46974"/>
    </conflict>
    <text>Extended N-terminus.</text>
</comment>
<feature type="chain" id="PRO_0000426859" description="Adenine phosphoribosyltransferase">
    <location>
        <begin position="1"/>
        <end position="212"/>
    </location>
</feature>
<evidence type="ECO:0000255" key="1">
    <source>
        <dbReference type="HAMAP-Rule" id="MF_00004"/>
    </source>
</evidence>
<evidence type="ECO:0000305" key="2"/>
<name>APT_MYCTO</name>
<proteinExistence type="inferred from homology"/>
<reference key="1">
    <citation type="journal article" date="2002" name="J. Bacteriol.">
        <title>Whole-genome comparison of Mycobacterium tuberculosis clinical and laboratory strains.</title>
        <authorList>
            <person name="Fleischmann R.D."/>
            <person name="Alland D."/>
            <person name="Eisen J.A."/>
            <person name="Carpenter L."/>
            <person name="White O."/>
            <person name="Peterson J.D."/>
            <person name="DeBoy R.T."/>
            <person name="Dodson R.J."/>
            <person name="Gwinn M.L."/>
            <person name="Haft D.H."/>
            <person name="Hickey E.K."/>
            <person name="Kolonay J.F."/>
            <person name="Nelson W.C."/>
            <person name="Umayam L.A."/>
            <person name="Ermolaeva M.D."/>
            <person name="Salzberg S.L."/>
            <person name="Delcher A."/>
            <person name="Utterback T.R."/>
            <person name="Weidman J.F."/>
            <person name="Khouri H.M."/>
            <person name="Gill J."/>
            <person name="Mikula A."/>
            <person name="Bishai W."/>
            <person name="Jacobs W.R. Jr."/>
            <person name="Venter J.C."/>
            <person name="Fraser C.M."/>
        </authorList>
    </citation>
    <scope>NUCLEOTIDE SEQUENCE [LARGE SCALE GENOMIC DNA]</scope>
    <source>
        <strain>CDC 1551 / Oshkosh</strain>
    </source>
</reference>
<protein>
    <recommendedName>
        <fullName evidence="1">Adenine phosphoribosyltransferase</fullName>
        <shortName evidence="1">APRT</shortName>
        <ecNumber evidence="1">2.4.2.7</ecNumber>
    </recommendedName>
</protein>
<organism>
    <name type="scientific">Mycobacterium tuberculosis (strain CDC 1551 / Oshkosh)</name>
    <dbReference type="NCBI Taxonomy" id="83331"/>
    <lineage>
        <taxon>Bacteria</taxon>
        <taxon>Bacillati</taxon>
        <taxon>Actinomycetota</taxon>
        <taxon>Actinomycetes</taxon>
        <taxon>Mycobacteriales</taxon>
        <taxon>Mycobacteriaceae</taxon>
        <taxon>Mycobacterium</taxon>
        <taxon>Mycobacterium tuberculosis complex</taxon>
    </lineage>
</organism>
<sequence length="212" mass="22099">MLNVIATGLSLKARGKRRRQRWVDDGRVLALGESRRSSAISVADVVASLTRDVADFPVPGVEFKDLTPLFADRRGLAAVTEALADRASGADLVAGVDARGFLVAAAVATRLEVGVLAVRKGGKLPRPVLSEEYYREYGAATLEILAEGIEVAGRRVVIIDDVLATGGTIGATRRLLERGGANVAGAAVVVELAGLSGRAALAPLPVHSLSRL</sequence>